<evidence type="ECO:0000250" key="1">
    <source>
        <dbReference type="UniProtKB" id="P00953"/>
    </source>
</evidence>
<evidence type="ECO:0000250" key="2">
    <source>
        <dbReference type="UniProtKB" id="Q9UGM6"/>
    </source>
</evidence>
<evidence type="ECO:0000255" key="3"/>
<evidence type="ECO:0000256" key="4">
    <source>
        <dbReference type="SAM" id="MobiDB-lite"/>
    </source>
</evidence>
<evidence type="ECO:0000305" key="5"/>
<evidence type="ECO:0000312" key="6">
    <source>
        <dbReference type="WormBase" id="C34E10.4b"/>
    </source>
</evidence>
<keyword id="KW-0030">Aminoacyl-tRNA synthetase</keyword>
<keyword id="KW-0067">ATP-binding</keyword>
<keyword id="KW-0436">Ligase</keyword>
<keyword id="KW-0496">Mitochondrion</keyword>
<keyword id="KW-0547">Nucleotide-binding</keyword>
<keyword id="KW-0648">Protein biosynthesis</keyword>
<keyword id="KW-1185">Reference proteome</keyword>
<keyword id="KW-0809">Transit peptide</keyword>
<accession>C0HKD6</accession>
<accession>P46579</accession>
<accession>Q5TYM1</accession>
<accession>Q7Z259</accession>
<organism>
    <name type="scientific">Caenorhabditis elegans</name>
    <dbReference type="NCBI Taxonomy" id="6239"/>
    <lineage>
        <taxon>Eukaryota</taxon>
        <taxon>Metazoa</taxon>
        <taxon>Ecdysozoa</taxon>
        <taxon>Nematoda</taxon>
        <taxon>Chromadorea</taxon>
        <taxon>Rhabditida</taxon>
        <taxon>Rhabditina</taxon>
        <taxon>Rhabditomorpha</taxon>
        <taxon>Rhabditoidea</taxon>
        <taxon>Rhabditidae</taxon>
        <taxon>Peloderinae</taxon>
        <taxon>Caenorhabditis</taxon>
    </lineage>
</organism>
<feature type="transit peptide" description="Mitochondrion" evidence="3">
    <location>
        <begin position="1"/>
        <end status="unknown"/>
    </location>
</feature>
<feature type="chain" id="PRO_0000441751" description="Tryptophan--tRNA ligase, mitochondrial">
    <location>
        <begin status="unknown"/>
        <end position="360"/>
    </location>
</feature>
<feature type="region of interest" description="Disordered" evidence="4">
    <location>
        <begin position="220"/>
        <end position="241"/>
    </location>
</feature>
<feature type="short sequence motif" description="'HIGH' region" evidence="5">
    <location>
        <begin position="39"/>
        <end position="47"/>
    </location>
</feature>
<feature type="short sequence motif" description="'KMSKS' region" evidence="5">
    <location>
        <begin position="229"/>
        <end position="233"/>
    </location>
</feature>
<feature type="compositionally biased region" description="Basic and acidic residues" evidence="4">
    <location>
        <begin position="220"/>
        <end position="230"/>
    </location>
</feature>
<feature type="binding site" evidence="2">
    <location>
        <position position="38"/>
    </location>
    <ligand>
        <name>ATP</name>
        <dbReference type="ChEBI" id="CHEBI:30616"/>
    </ligand>
</feature>
<feature type="binding site" evidence="2">
    <location>
        <begin position="44"/>
        <end position="47"/>
    </location>
    <ligand>
        <name>ATP</name>
        <dbReference type="ChEBI" id="CHEBI:30616"/>
    </ligand>
</feature>
<feature type="binding site" evidence="2">
    <location>
        <position position="168"/>
    </location>
    <ligand>
        <name>L-tryptophan</name>
        <dbReference type="ChEBI" id="CHEBI:57912"/>
    </ligand>
</feature>
<feature type="binding site" evidence="2">
    <location>
        <begin position="180"/>
        <end position="182"/>
    </location>
    <ligand>
        <name>ATP</name>
        <dbReference type="ChEBI" id="CHEBI:30616"/>
    </ligand>
</feature>
<feature type="binding site" evidence="2">
    <location>
        <begin position="229"/>
        <end position="233"/>
    </location>
    <ligand>
        <name>ATP</name>
        <dbReference type="ChEBI" id="CHEBI:30616"/>
    </ligand>
</feature>
<gene>
    <name evidence="6" type="primary">prx-10</name>
    <name evidence="6" type="synonym">wars-2</name>
    <name evidence="6" type="synonym">wrs-2</name>
    <name evidence="6" type="ORF">C34E10.4</name>
</gene>
<protein>
    <recommendedName>
        <fullName>Tryptophan--tRNA ligase, mitochondrial</fullName>
        <ecNumber evidence="1">6.1.1.2</ecNumber>
    </recommendedName>
    <alternativeName>
        <fullName>Tryptophanyl-tRNA synthetase</fullName>
        <shortName>TrpRS</shortName>
    </alternativeName>
</protein>
<name>SYWM_CAEEL</name>
<dbReference type="EC" id="6.1.1.2" evidence="1"/>
<dbReference type="EMBL" id="BX284603">
    <property type="protein sequence ID" value="CCD66648.1"/>
    <property type="molecule type" value="Genomic_DNA"/>
</dbReference>
<dbReference type="EMBL" id="AB096634">
    <property type="protein sequence ID" value="BAC76734.1"/>
    <property type="molecule type" value="mRNA"/>
</dbReference>
<dbReference type="PIR" id="T15761">
    <property type="entry name" value="T15761"/>
</dbReference>
<dbReference type="RefSeq" id="NP_001021201.1">
    <property type="nucleotide sequence ID" value="NM_001026030.3"/>
</dbReference>
<dbReference type="SMR" id="C0HKD6"/>
<dbReference type="FunCoup" id="C0HKD6">
    <property type="interactions" value="2596"/>
</dbReference>
<dbReference type="STRING" id="6239.C34E10.4b.1"/>
<dbReference type="PaxDb" id="6239-C34E10.4b"/>
<dbReference type="EnsemblMetazoa" id="C34E10.4b.1">
    <property type="protein sequence ID" value="C34E10.4b.1"/>
    <property type="gene ID" value="WBGene00006946"/>
</dbReference>
<dbReference type="EnsemblMetazoa" id="C34E10.4b.2">
    <property type="protein sequence ID" value="C34E10.4b.2"/>
    <property type="gene ID" value="WBGene00006946"/>
</dbReference>
<dbReference type="EnsemblMetazoa" id="C34E10.4b.3">
    <property type="protein sequence ID" value="C34E10.4b.3"/>
    <property type="gene ID" value="WBGene00006946"/>
</dbReference>
<dbReference type="EnsemblMetazoa" id="C34E10.4b.4">
    <property type="protein sequence ID" value="C34E10.4b.4"/>
    <property type="gene ID" value="WBGene00006946"/>
</dbReference>
<dbReference type="EnsemblMetazoa" id="C34E10.4b.5">
    <property type="protein sequence ID" value="C34E10.4b.5"/>
    <property type="gene ID" value="WBGene00006946"/>
</dbReference>
<dbReference type="EnsemblMetazoa" id="C34E10.4b.6">
    <property type="protein sequence ID" value="C34E10.4b.6"/>
    <property type="gene ID" value="WBGene00006946"/>
</dbReference>
<dbReference type="AGR" id="WB:WBGene00006946"/>
<dbReference type="WormBase" id="C34E10.4b">
    <property type="protein sequence ID" value="CE37710"/>
    <property type="gene ID" value="WBGene00006946"/>
    <property type="gene designation" value="prx-10"/>
</dbReference>
<dbReference type="eggNOG" id="KOG2713">
    <property type="taxonomic scope" value="Eukaryota"/>
</dbReference>
<dbReference type="InParanoid" id="C0HKD6"/>
<dbReference type="OMA" id="GWGQFKP"/>
<dbReference type="OrthoDB" id="15808at2759"/>
<dbReference type="Proteomes" id="UP000001940">
    <property type="component" value="Chromosome III"/>
</dbReference>
<dbReference type="Bgee" id="WBGene00006946">
    <property type="expression patterns" value="Expressed in germ line (C elegans) and 4 other cell types or tissues"/>
</dbReference>
<dbReference type="ExpressionAtlas" id="C0HKD6">
    <property type="expression patterns" value="baseline and differential"/>
</dbReference>
<dbReference type="GO" id="GO:0005759">
    <property type="term" value="C:mitochondrial matrix"/>
    <property type="evidence" value="ECO:0000318"/>
    <property type="project" value="GO_Central"/>
</dbReference>
<dbReference type="GO" id="GO:0005739">
    <property type="term" value="C:mitochondrion"/>
    <property type="evidence" value="ECO:0000318"/>
    <property type="project" value="GO_Central"/>
</dbReference>
<dbReference type="GO" id="GO:0005524">
    <property type="term" value="F:ATP binding"/>
    <property type="evidence" value="ECO:0007669"/>
    <property type="project" value="UniProtKB-KW"/>
</dbReference>
<dbReference type="GO" id="GO:0004830">
    <property type="term" value="F:tryptophan-tRNA ligase activity"/>
    <property type="evidence" value="ECO:0000318"/>
    <property type="project" value="GO_Central"/>
</dbReference>
<dbReference type="GO" id="GO:0070183">
    <property type="term" value="P:mitochondrial tryptophanyl-tRNA aminoacylation"/>
    <property type="evidence" value="ECO:0000318"/>
    <property type="project" value="GO_Central"/>
</dbReference>
<dbReference type="FunFam" id="1.10.240.10:FF:000005">
    <property type="entry name" value="Tryptophan--tRNA ligase"/>
    <property type="match status" value="1"/>
</dbReference>
<dbReference type="Gene3D" id="3.40.50.620">
    <property type="entry name" value="HUPs"/>
    <property type="match status" value="1"/>
</dbReference>
<dbReference type="Gene3D" id="1.10.240.10">
    <property type="entry name" value="Tyrosyl-Transfer RNA Synthetase"/>
    <property type="match status" value="1"/>
</dbReference>
<dbReference type="InterPro" id="IPR001412">
    <property type="entry name" value="aa-tRNA-synth_I_CS"/>
</dbReference>
<dbReference type="InterPro" id="IPR002305">
    <property type="entry name" value="aa-tRNA-synth_Ic"/>
</dbReference>
<dbReference type="InterPro" id="IPR014729">
    <property type="entry name" value="Rossmann-like_a/b/a_fold"/>
</dbReference>
<dbReference type="InterPro" id="IPR002306">
    <property type="entry name" value="Trp-tRNA-ligase"/>
</dbReference>
<dbReference type="InterPro" id="IPR050203">
    <property type="entry name" value="Trp-tRNA_synthetase"/>
</dbReference>
<dbReference type="NCBIfam" id="TIGR00233">
    <property type="entry name" value="trpS"/>
    <property type="match status" value="1"/>
</dbReference>
<dbReference type="PANTHER" id="PTHR43766">
    <property type="entry name" value="TRYPTOPHAN--TRNA LIGASE, MITOCHONDRIAL"/>
    <property type="match status" value="1"/>
</dbReference>
<dbReference type="PANTHER" id="PTHR43766:SF1">
    <property type="entry name" value="TRYPTOPHAN--TRNA LIGASE, MITOCHONDRIAL"/>
    <property type="match status" value="1"/>
</dbReference>
<dbReference type="Pfam" id="PF00579">
    <property type="entry name" value="tRNA-synt_1b"/>
    <property type="match status" value="1"/>
</dbReference>
<dbReference type="PRINTS" id="PR01039">
    <property type="entry name" value="TRNASYNTHTRP"/>
</dbReference>
<dbReference type="SUPFAM" id="SSF52374">
    <property type="entry name" value="Nucleotidylyl transferase"/>
    <property type="match status" value="1"/>
</dbReference>
<dbReference type="PROSITE" id="PS00178">
    <property type="entry name" value="AA_TRNA_LIGASE_I"/>
    <property type="match status" value="1"/>
</dbReference>
<comment type="function">
    <text evidence="1">Catalyzes the attachment of tryptophan to tRNA(Trp).</text>
</comment>
<comment type="catalytic activity">
    <reaction evidence="1">
        <text>tRNA(Trp) + L-tryptophan + ATP = L-tryptophyl-tRNA(Trp) + AMP + diphosphate + H(+)</text>
        <dbReference type="Rhea" id="RHEA:24080"/>
        <dbReference type="Rhea" id="RHEA-COMP:9671"/>
        <dbReference type="Rhea" id="RHEA-COMP:9705"/>
        <dbReference type="ChEBI" id="CHEBI:15378"/>
        <dbReference type="ChEBI" id="CHEBI:30616"/>
        <dbReference type="ChEBI" id="CHEBI:33019"/>
        <dbReference type="ChEBI" id="CHEBI:57912"/>
        <dbReference type="ChEBI" id="CHEBI:78442"/>
        <dbReference type="ChEBI" id="CHEBI:78535"/>
        <dbReference type="ChEBI" id="CHEBI:456215"/>
        <dbReference type="EC" id="6.1.1.2"/>
    </reaction>
</comment>
<comment type="subcellular location">
    <subcellularLocation>
        <location evidence="2">Mitochondrion matrix</location>
    </subcellularLocation>
</comment>
<comment type="miscellaneous">
    <text>Complex locus in which transcription results in the production of one large primary transcript that gives rise to two functionally distinct proteins, wars-2 and prx-10.</text>
</comment>
<comment type="similarity">
    <text evidence="5">Belongs to the class-I aminoacyl-tRNA synthetase family.</text>
</comment>
<proteinExistence type="evidence at transcript level"/>
<sequence length="360" mass="40474">MIFSGKFTSHLLNYGFKPNNLRLLSTSTHPTIYFTGIQPTGIPHLGNFFGSIEPWTELQNSVDKNILMMLSVVDQHAISLGPLPANELRQNTHQMTASLIACGVDPNRTLLFRQSDVPQIAQISWILGSLQTTSKLARLPQYKEKKERFKKGDIPVGLLTYPLLQAADVLTFKATTVPVGEDQSQHLNLLGGLAYAFNKTYETEIFPIPKQLTRESHARIRSLREPEKKMSKSSGGPRSRIEITDSRSTIIEKCQKAQSDNAGKVTYDKENRLAVSNLLDLYSAVTKTQTSEIDFSNWTTLDLKMNLAEAVDKRLAPIRQKFEELQNTGEVDKVLTENGEKAREIAEKNLEEIRRTIGFL</sequence>
<reference key="1">
    <citation type="journal article" date="1998" name="Science">
        <title>Genome sequence of the nematode C. elegans: a platform for investigating biology.</title>
        <authorList>
            <consortium name="The C. elegans sequencing consortium"/>
        </authorList>
    </citation>
    <scope>NUCLEOTIDE SEQUENCE [LARGE SCALE GENOMIC DNA]</scope>
    <source>
        <strain>Bristol N2</strain>
    </source>
</reference>
<reference key="2">
    <citation type="submission" date="2002-11" db="EMBL/GenBank/DDBJ databases">
        <title>C. elegans mitochondrial aminoacyl-tRNA synthetases.</title>
        <authorList>
            <person name="Ohtsuki T."/>
        </authorList>
    </citation>
    <scope>NUCLEOTIDE SEQUENCE [MRNA]</scope>
</reference>